<feature type="signal peptide" evidence="2">
    <location>
        <begin position="1"/>
        <end position="24"/>
    </location>
</feature>
<feature type="chain" id="PRO_0000376897" description="Kunitz-type serine protease inhibitor homolog mulgin-1">
    <location>
        <begin position="25"/>
        <end position="83"/>
    </location>
</feature>
<feature type="domain" description="BPTI/Kunitz inhibitor" evidence="3">
    <location>
        <begin position="31"/>
        <end position="81"/>
    </location>
</feature>
<feature type="disulfide bond" evidence="3">
    <location>
        <begin position="31"/>
        <end position="81"/>
    </location>
</feature>
<feature type="disulfide bond" evidence="3">
    <location>
        <begin position="40"/>
        <end position="64"/>
    </location>
</feature>
<feature type="disulfide bond" evidence="3">
    <location>
        <begin position="56"/>
        <end position="77"/>
    </location>
</feature>
<reference key="1">
    <citation type="submission" date="2004-05" db="EMBL/GenBank/DDBJ databases">
        <title>Mulga snake cDNA encoding mulgin-1.</title>
        <authorList>
            <person name="Filippovich I."/>
            <person name="Sorokina N.I."/>
        </authorList>
    </citation>
    <scope>NUCLEOTIDE SEQUENCE [MRNA]</scope>
    <source>
        <tissue>Venom gland</tissue>
    </source>
</reference>
<keyword id="KW-1015">Disulfide bond</keyword>
<keyword id="KW-0964">Secreted</keyword>
<keyword id="KW-0732">Signal</keyword>
<keyword id="KW-0800">Toxin</keyword>
<accession>Q6ITC1</accession>
<protein>
    <recommendedName>
        <fullName>Kunitz-type serine protease inhibitor homolog mulgin-1</fullName>
    </recommendedName>
</protein>
<name>VKTH1_PSEAU</name>
<comment type="function">
    <text evidence="1">Serine protease inhibitor homolog that only shows inhibitory activity against MMP2.</text>
</comment>
<comment type="subcellular location">
    <subcellularLocation>
        <location evidence="1">Secreted</location>
    </subcellularLocation>
</comment>
<comment type="tissue specificity">
    <text>Expressed by the venom gland.</text>
</comment>
<comment type="miscellaneous">
    <text evidence="1">Negative results: does not show inhibition against serine proteases, and voltage-gated potassium channels (Kv).</text>
</comment>
<comment type="similarity">
    <text evidence="4">Belongs to the venom Kunitz-type family.</text>
</comment>
<evidence type="ECO:0000250" key="1"/>
<evidence type="ECO:0000255" key="2"/>
<evidence type="ECO:0000255" key="3">
    <source>
        <dbReference type="PROSITE-ProRule" id="PRU00031"/>
    </source>
</evidence>
<evidence type="ECO:0000305" key="4"/>
<dbReference type="EMBL" id="AY626924">
    <property type="protein sequence ID" value="AAT45400.1"/>
    <property type="molecule type" value="mRNA"/>
</dbReference>
<dbReference type="SMR" id="Q6ITC1"/>
<dbReference type="MEROPS" id="I02.052"/>
<dbReference type="GO" id="GO:0005615">
    <property type="term" value="C:extracellular space"/>
    <property type="evidence" value="ECO:0007669"/>
    <property type="project" value="TreeGrafter"/>
</dbReference>
<dbReference type="GO" id="GO:0004867">
    <property type="term" value="F:serine-type endopeptidase inhibitor activity"/>
    <property type="evidence" value="ECO:0007669"/>
    <property type="project" value="InterPro"/>
</dbReference>
<dbReference type="GO" id="GO:0090729">
    <property type="term" value="F:toxin activity"/>
    <property type="evidence" value="ECO:0007669"/>
    <property type="project" value="UniProtKB-KW"/>
</dbReference>
<dbReference type="CDD" id="cd22594">
    <property type="entry name" value="Kunitz_textilinin-like"/>
    <property type="match status" value="1"/>
</dbReference>
<dbReference type="FunFam" id="4.10.410.10:FF:000004">
    <property type="entry name" value="Tissue factor pathway inhibitor"/>
    <property type="match status" value="1"/>
</dbReference>
<dbReference type="Gene3D" id="4.10.410.10">
    <property type="entry name" value="Pancreatic trypsin inhibitor Kunitz domain"/>
    <property type="match status" value="1"/>
</dbReference>
<dbReference type="InterPro" id="IPR002223">
    <property type="entry name" value="Kunitz_BPTI"/>
</dbReference>
<dbReference type="InterPro" id="IPR036880">
    <property type="entry name" value="Kunitz_BPTI_sf"/>
</dbReference>
<dbReference type="InterPro" id="IPR020901">
    <property type="entry name" value="Prtase_inh_Kunz-CS"/>
</dbReference>
<dbReference type="InterPro" id="IPR050098">
    <property type="entry name" value="TFPI/VKTCI-like"/>
</dbReference>
<dbReference type="PANTHER" id="PTHR10083:SF374">
    <property type="entry name" value="BPTI_KUNITZ INHIBITOR DOMAIN-CONTAINING PROTEIN"/>
    <property type="match status" value="1"/>
</dbReference>
<dbReference type="PANTHER" id="PTHR10083">
    <property type="entry name" value="KUNITZ-TYPE PROTEASE INHIBITOR-RELATED"/>
    <property type="match status" value="1"/>
</dbReference>
<dbReference type="Pfam" id="PF00014">
    <property type="entry name" value="Kunitz_BPTI"/>
    <property type="match status" value="1"/>
</dbReference>
<dbReference type="PRINTS" id="PR00759">
    <property type="entry name" value="BASICPTASE"/>
</dbReference>
<dbReference type="SMART" id="SM00131">
    <property type="entry name" value="KU"/>
    <property type="match status" value="1"/>
</dbReference>
<dbReference type="SUPFAM" id="SSF57362">
    <property type="entry name" value="BPTI-like"/>
    <property type="match status" value="1"/>
</dbReference>
<dbReference type="PROSITE" id="PS00280">
    <property type="entry name" value="BPTI_KUNITZ_1"/>
    <property type="match status" value="1"/>
</dbReference>
<dbReference type="PROSITE" id="PS50279">
    <property type="entry name" value="BPTI_KUNITZ_2"/>
    <property type="match status" value="1"/>
</dbReference>
<sequence>MSSGGLLLLLGLLTLWEVLTPVSSKDRPRFCELPADPGPCNGLFQAFYYNPVQRTCLKFRYGGCKGNPNTFKTIEECKRTCAA</sequence>
<organism>
    <name type="scientific">Pseudechis australis</name>
    <name type="common">Mulga snake</name>
    <name type="synonym">King brown snake</name>
    <dbReference type="NCBI Taxonomy" id="8670"/>
    <lineage>
        <taxon>Eukaryota</taxon>
        <taxon>Metazoa</taxon>
        <taxon>Chordata</taxon>
        <taxon>Craniata</taxon>
        <taxon>Vertebrata</taxon>
        <taxon>Euteleostomi</taxon>
        <taxon>Lepidosauria</taxon>
        <taxon>Squamata</taxon>
        <taxon>Bifurcata</taxon>
        <taxon>Unidentata</taxon>
        <taxon>Episquamata</taxon>
        <taxon>Toxicofera</taxon>
        <taxon>Serpentes</taxon>
        <taxon>Colubroidea</taxon>
        <taxon>Elapidae</taxon>
        <taxon>Hydrophiinae</taxon>
        <taxon>Pseudechis</taxon>
    </lineage>
</organism>
<proteinExistence type="evidence at transcript level"/>